<proteinExistence type="evidence at protein level"/>
<keyword id="KW-0963">Cytoplasm</keyword>
<keyword id="KW-0456">Lyase</keyword>
<keyword id="KW-0539">Nucleus</keyword>
<keyword id="KW-1185">Reference proteome</keyword>
<keyword id="KW-0704">Schiff base</keyword>
<dbReference type="EC" id="4.1.2.4" evidence="2"/>
<dbReference type="EMBL" id="AK083298">
    <property type="protein sequence ID" value="BAC38850.1"/>
    <property type="molecule type" value="mRNA"/>
</dbReference>
<dbReference type="EMBL" id="AK145820">
    <property type="protein sequence ID" value="BAE26672.1"/>
    <property type="molecule type" value="mRNA"/>
</dbReference>
<dbReference type="EMBL" id="AK150273">
    <property type="protein sequence ID" value="BAE29429.1"/>
    <property type="molecule type" value="mRNA"/>
</dbReference>
<dbReference type="EMBL" id="AK150712">
    <property type="protein sequence ID" value="BAE29790.1"/>
    <property type="molecule type" value="mRNA"/>
</dbReference>
<dbReference type="EMBL" id="AK152462">
    <property type="protein sequence ID" value="BAE31239.1"/>
    <property type="molecule type" value="mRNA"/>
</dbReference>
<dbReference type="EMBL" id="AK169418">
    <property type="protein sequence ID" value="BAE41164.1"/>
    <property type="molecule type" value="mRNA"/>
</dbReference>
<dbReference type="EMBL" id="BC016218">
    <property type="protein sequence ID" value="AAH16218.1"/>
    <property type="molecule type" value="mRNA"/>
</dbReference>
<dbReference type="CCDS" id="CCDS20666.1"/>
<dbReference type="RefSeq" id="NP_766321.1">
    <property type="nucleotide sequence ID" value="NM_172733.1"/>
</dbReference>
<dbReference type="SMR" id="Q91YP3"/>
<dbReference type="BioGRID" id="231264">
    <property type="interactions" value="1"/>
</dbReference>
<dbReference type="FunCoup" id="Q91YP3">
    <property type="interactions" value="1316"/>
</dbReference>
<dbReference type="STRING" id="10090.ENSMUSP00000084959"/>
<dbReference type="iPTMnet" id="Q91YP3"/>
<dbReference type="PhosphoSitePlus" id="Q91YP3"/>
<dbReference type="SwissPalm" id="Q91YP3"/>
<dbReference type="jPOST" id="Q91YP3"/>
<dbReference type="PaxDb" id="10090-ENSMUSP00000084959"/>
<dbReference type="PeptideAtlas" id="Q91YP3"/>
<dbReference type="ProteomicsDB" id="279341"/>
<dbReference type="Pumba" id="Q91YP3"/>
<dbReference type="Antibodypedia" id="55098">
    <property type="antibodies" value="71 antibodies from 15 providers"/>
</dbReference>
<dbReference type="DNASU" id="232449"/>
<dbReference type="Ensembl" id="ENSMUST00000087675.9">
    <property type="protein sequence ID" value="ENSMUSP00000084959.7"/>
    <property type="gene ID" value="ENSMUSG00000030225.12"/>
</dbReference>
<dbReference type="GeneID" id="232449"/>
<dbReference type="KEGG" id="mmu:232449"/>
<dbReference type="UCSC" id="uc009enh.1">
    <property type="organism name" value="mouse"/>
</dbReference>
<dbReference type="AGR" id="MGI:1913762"/>
<dbReference type="CTD" id="51071"/>
<dbReference type="MGI" id="MGI:1913762">
    <property type="gene designation" value="Dera"/>
</dbReference>
<dbReference type="VEuPathDB" id="HostDB:ENSMUSG00000030225"/>
<dbReference type="eggNOG" id="KOG3981">
    <property type="taxonomic scope" value="Eukaryota"/>
</dbReference>
<dbReference type="GeneTree" id="ENSGT00390000007878"/>
<dbReference type="HOGENOM" id="CLU_053595_3_0_1"/>
<dbReference type="InParanoid" id="Q91YP3"/>
<dbReference type="OMA" id="WMIMIRE"/>
<dbReference type="OrthoDB" id="70823at2759"/>
<dbReference type="PhylomeDB" id="Q91YP3"/>
<dbReference type="TreeFam" id="TF314251"/>
<dbReference type="Reactome" id="R-MMU-6798695">
    <property type="pathway name" value="Neutrophil degranulation"/>
</dbReference>
<dbReference type="Reactome" id="R-MMU-71336">
    <property type="pathway name" value="Pentose phosphate pathway"/>
</dbReference>
<dbReference type="UniPathway" id="UPA00002">
    <property type="reaction ID" value="UER00468"/>
</dbReference>
<dbReference type="BioGRID-ORCS" id="232449">
    <property type="hits" value="2 hits in 76 CRISPR screens"/>
</dbReference>
<dbReference type="ChiTaRS" id="Dera">
    <property type="organism name" value="mouse"/>
</dbReference>
<dbReference type="PRO" id="PR:Q91YP3"/>
<dbReference type="Proteomes" id="UP000000589">
    <property type="component" value="Chromosome 6"/>
</dbReference>
<dbReference type="RNAct" id="Q91YP3">
    <property type="molecule type" value="protein"/>
</dbReference>
<dbReference type="Bgee" id="ENSMUSG00000030225">
    <property type="expression patterns" value="Expressed in dorsal pancreas and 203 other cell types or tissues"/>
</dbReference>
<dbReference type="ExpressionAtlas" id="Q91YP3">
    <property type="expression patterns" value="baseline and differential"/>
</dbReference>
<dbReference type="GO" id="GO:0005737">
    <property type="term" value="C:cytoplasm"/>
    <property type="evidence" value="ECO:0007669"/>
    <property type="project" value="UniProtKB-SubCell"/>
</dbReference>
<dbReference type="GO" id="GO:0005654">
    <property type="term" value="C:nucleoplasm"/>
    <property type="evidence" value="ECO:0007669"/>
    <property type="project" value="Ensembl"/>
</dbReference>
<dbReference type="GO" id="GO:0004139">
    <property type="term" value="F:deoxyribose-phosphate aldolase activity"/>
    <property type="evidence" value="ECO:0007669"/>
    <property type="project" value="UniProtKB-EC"/>
</dbReference>
<dbReference type="GO" id="GO:0046121">
    <property type="term" value="P:deoxyribonucleoside catabolic process"/>
    <property type="evidence" value="ECO:0007669"/>
    <property type="project" value="Ensembl"/>
</dbReference>
<dbReference type="GO" id="GO:0009264">
    <property type="term" value="P:deoxyribonucleotide catabolic process"/>
    <property type="evidence" value="ECO:0007669"/>
    <property type="project" value="InterPro"/>
</dbReference>
<dbReference type="GO" id="GO:0046386">
    <property type="term" value="P:deoxyribose phosphate catabolic process"/>
    <property type="evidence" value="ECO:0007669"/>
    <property type="project" value="UniProtKB-UniPathway"/>
</dbReference>
<dbReference type="CDD" id="cd00959">
    <property type="entry name" value="DeoC"/>
    <property type="match status" value="1"/>
</dbReference>
<dbReference type="FunFam" id="3.20.20.70:FF:000103">
    <property type="entry name" value="Putative deoxyribose-phosphate aldolase"/>
    <property type="match status" value="1"/>
</dbReference>
<dbReference type="Gene3D" id="3.20.20.70">
    <property type="entry name" value="Aldolase class I"/>
    <property type="match status" value="1"/>
</dbReference>
<dbReference type="InterPro" id="IPR013785">
    <property type="entry name" value="Aldolase_TIM"/>
</dbReference>
<dbReference type="InterPro" id="IPR011343">
    <property type="entry name" value="DeoC"/>
</dbReference>
<dbReference type="InterPro" id="IPR002915">
    <property type="entry name" value="DeoC/FbaB/LacD_aldolase"/>
</dbReference>
<dbReference type="NCBIfam" id="TIGR00126">
    <property type="entry name" value="deoC"/>
    <property type="match status" value="1"/>
</dbReference>
<dbReference type="PANTHER" id="PTHR10889">
    <property type="entry name" value="DEOXYRIBOSE-PHOSPHATE ALDOLASE"/>
    <property type="match status" value="1"/>
</dbReference>
<dbReference type="PANTHER" id="PTHR10889:SF3">
    <property type="entry name" value="DEOXYRIBOSE-PHOSPHATE ALDOLASE"/>
    <property type="match status" value="1"/>
</dbReference>
<dbReference type="Pfam" id="PF01791">
    <property type="entry name" value="DeoC"/>
    <property type="match status" value="1"/>
</dbReference>
<dbReference type="PIRSF" id="PIRSF001357">
    <property type="entry name" value="DeoC"/>
    <property type="match status" value="1"/>
</dbReference>
<dbReference type="SMART" id="SM01133">
    <property type="entry name" value="DeoC"/>
    <property type="match status" value="1"/>
</dbReference>
<dbReference type="SUPFAM" id="SSF51569">
    <property type="entry name" value="Aldolase"/>
    <property type="match status" value="1"/>
</dbReference>
<organism>
    <name type="scientific">Mus musculus</name>
    <name type="common">Mouse</name>
    <dbReference type="NCBI Taxonomy" id="10090"/>
    <lineage>
        <taxon>Eukaryota</taxon>
        <taxon>Metazoa</taxon>
        <taxon>Chordata</taxon>
        <taxon>Craniata</taxon>
        <taxon>Vertebrata</taxon>
        <taxon>Euteleostomi</taxon>
        <taxon>Mammalia</taxon>
        <taxon>Eutheria</taxon>
        <taxon>Euarchontoglires</taxon>
        <taxon>Glires</taxon>
        <taxon>Rodentia</taxon>
        <taxon>Myomorpha</taxon>
        <taxon>Muroidea</taxon>
        <taxon>Muridae</taxon>
        <taxon>Murinae</taxon>
        <taxon>Mus</taxon>
        <taxon>Mus</taxon>
    </lineage>
</organism>
<comment type="function">
    <text evidence="2">Catalyzes a reversible aldol reaction between acetaldehyde and D-glyceraldehyde 3-phosphate to generate 2-deoxy-D-ribose 5-phosphate. Participates in stress granule (SG) assembly. May allow ATP production from extracellular deoxyinosine in conditions of energy deprivation.</text>
</comment>
<comment type="catalytic activity">
    <reaction evidence="2">
        <text>2-deoxy-D-ribose 5-phosphate = D-glyceraldehyde 3-phosphate + acetaldehyde</text>
        <dbReference type="Rhea" id="RHEA:12821"/>
        <dbReference type="ChEBI" id="CHEBI:15343"/>
        <dbReference type="ChEBI" id="CHEBI:59776"/>
        <dbReference type="ChEBI" id="CHEBI:62877"/>
        <dbReference type="EC" id="4.1.2.4"/>
    </reaction>
</comment>
<comment type="pathway">
    <text>Carbohydrate degradation; 2-deoxy-D-ribose 1-phosphate degradation; D-glyceraldehyde 3-phosphate and acetaldehyde from 2-deoxy-alpha-D-ribose 1-phosphate: step 2/2.</text>
</comment>
<comment type="subunit">
    <text evidence="2">Interacts with YBX1.</text>
</comment>
<comment type="subcellular location">
    <subcellularLocation>
        <location evidence="2">Cytoplasm</location>
    </subcellularLocation>
    <subcellularLocation>
        <location evidence="2">Cytoplasmic granule</location>
    </subcellularLocation>
    <subcellularLocation>
        <location evidence="2">Nucleus</location>
    </subcellularLocation>
    <text evidence="2">Recruited to stress granules but not to processing bodies upon arsenite or clotrimazole treatment or energy deprivation.</text>
</comment>
<comment type="similarity">
    <text evidence="3">Belongs to the DeoC/FbaB aldolase family. DeoC type 2 subfamily.</text>
</comment>
<protein>
    <recommendedName>
        <fullName>Deoxyribose-phosphate aldolase</fullName>
        <shortName>DERA</shortName>
        <ecNumber evidence="2">4.1.2.4</ecNumber>
    </recommendedName>
    <alternativeName>
        <fullName>2-deoxy-D-ribose 5-phosphate aldolase</fullName>
    </alternativeName>
    <alternativeName>
        <fullName>Phosphodeoxyriboaldolase</fullName>
        <shortName>Deoxyriboaldolase</shortName>
    </alternativeName>
</protein>
<sequence>MAAHCRGTELDLSWISKVQVNHAAVLRRAQQIQARRSVKKEWQAAWLLKAVTFIDLTTLSGDDTFSNVQRLCYKAKYPIRADLLKALNMDDKGITTAAVCVYPARVCDAVKALKAAGCSIPVASVATGFPAGQTHLKTRLEEIRLAVEDGATEIDVVINRTLVLTGQWEALYDEVTQFRKACGEAHLKTILATGELGSLTNVYKASLVAMMAGSDFIKTSTGKETVNATFPVAIVMLRAIRDFFWKTGNKVGFKPAGGIRTAKESLAWLSLVKEELGDEWLTPDLFRIGASSLLSDIERQIYHHVTGRYAAYHDLPMS</sequence>
<gene>
    <name type="primary">Dera</name>
</gene>
<feature type="chain" id="PRO_0000057311" description="Deoxyribose-phosphate aldolase">
    <location>
        <begin position="1"/>
        <end position="318"/>
    </location>
</feature>
<feature type="active site" description="Proton donor/acceptor" evidence="1">
    <location>
        <position position="155"/>
    </location>
</feature>
<feature type="active site" description="Schiff-base intermediate with acetaldehyde" evidence="2">
    <location>
        <position position="218"/>
    </location>
</feature>
<feature type="active site" description="Proton donor/acceptor" evidence="2">
    <location>
        <position position="254"/>
    </location>
</feature>
<evidence type="ECO:0000250" key="1">
    <source>
        <dbReference type="UniProtKB" id="P0A6L0"/>
    </source>
</evidence>
<evidence type="ECO:0000250" key="2">
    <source>
        <dbReference type="UniProtKB" id="Q9Y315"/>
    </source>
</evidence>
<evidence type="ECO:0000305" key="3"/>
<accession>Q91YP3</accession>
<accession>Q3UD33</accession>
<accession>Q9CZI8</accession>
<reference key="1">
    <citation type="journal article" date="2005" name="Science">
        <title>The transcriptional landscape of the mammalian genome.</title>
        <authorList>
            <person name="Carninci P."/>
            <person name="Kasukawa T."/>
            <person name="Katayama S."/>
            <person name="Gough J."/>
            <person name="Frith M.C."/>
            <person name="Maeda N."/>
            <person name="Oyama R."/>
            <person name="Ravasi T."/>
            <person name="Lenhard B."/>
            <person name="Wells C."/>
            <person name="Kodzius R."/>
            <person name="Shimokawa K."/>
            <person name="Bajic V.B."/>
            <person name="Brenner S.E."/>
            <person name="Batalov S."/>
            <person name="Forrest A.R."/>
            <person name="Zavolan M."/>
            <person name="Davis M.J."/>
            <person name="Wilming L.G."/>
            <person name="Aidinis V."/>
            <person name="Allen J.E."/>
            <person name="Ambesi-Impiombato A."/>
            <person name="Apweiler R."/>
            <person name="Aturaliya R.N."/>
            <person name="Bailey T.L."/>
            <person name="Bansal M."/>
            <person name="Baxter L."/>
            <person name="Beisel K.W."/>
            <person name="Bersano T."/>
            <person name="Bono H."/>
            <person name="Chalk A.M."/>
            <person name="Chiu K.P."/>
            <person name="Choudhary V."/>
            <person name="Christoffels A."/>
            <person name="Clutterbuck D.R."/>
            <person name="Crowe M.L."/>
            <person name="Dalla E."/>
            <person name="Dalrymple B.P."/>
            <person name="de Bono B."/>
            <person name="Della Gatta G."/>
            <person name="di Bernardo D."/>
            <person name="Down T."/>
            <person name="Engstrom P."/>
            <person name="Fagiolini M."/>
            <person name="Faulkner G."/>
            <person name="Fletcher C.F."/>
            <person name="Fukushima T."/>
            <person name="Furuno M."/>
            <person name="Futaki S."/>
            <person name="Gariboldi M."/>
            <person name="Georgii-Hemming P."/>
            <person name="Gingeras T.R."/>
            <person name="Gojobori T."/>
            <person name="Green R.E."/>
            <person name="Gustincich S."/>
            <person name="Harbers M."/>
            <person name="Hayashi Y."/>
            <person name="Hensch T.K."/>
            <person name="Hirokawa N."/>
            <person name="Hill D."/>
            <person name="Huminiecki L."/>
            <person name="Iacono M."/>
            <person name="Ikeo K."/>
            <person name="Iwama A."/>
            <person name="Ishikawa T."/>
            <person name="Jakt M."/>
            <person name="Kanapin A."/>
            <person name="Katoh M."/>
            <person name="Kawasawa Y."/>
            <person name="Kelso J."/>
            <person name="Kitamura H."/>
            <person name="Kitano H."/>
            <person name="Kollias G."/>
            <person name="Krishnan S.P."/>
            <person name="Kruger A."/>
            <person name="Kummerfeld S.K."/>
            <person name="Kurochkin I.V."/>
            <person name="Lareau L.F."/>
            <person name="Lazarevic D."/>
            <person name="Lipovich L."/>
            <person name="Liu J."/>
            <person name="Liuni S."/>
            <person name="McWilliam S."/>
            <person name="Madan Babu M."/>
            <person name="Madera M."/>
            <person name="Marchionni L."/>
            <person name="Matsuda H."/>
            <person name="Matsuzawa S."/>
            <person name="Miki H."/>
            <person name="Mignone F."/>
            <person name="Miyake S."/>
            <person name="Morris K."/>
            <person name="Mottagui-Tabar S."/>
            <person name="Mulder N."/>
            <person name="Nakano N."/>
            <person name="Nakauchi H."/>
            <person name="Ng P."/>
            <person name="Nilsson R."/>
            <person name="Nishiguchi S."/>
            <person name="Nishikawa S."/>
            <person name="Nori F."/>
            <person name="Ohara O."/>
            <person name="Okazaki Y."/>
            <person name="Orlando V."/>
            <person name="Pang K.C."/>
            <person name="Pavan W.J."/>
            <person name="Pavesi G."/>
            <person name="Pesole G."/>
            <person name="Petrovsky N."/>
            <person name="Piazza S."/>
            <person name="Reed J."/>
            <person name="Reid J.F."/>
            <person name="Ring B.Z."/>
            <person name="Ringwald M."/>
            <person name="Rost B."/>
            <person name="Ruan Y."/>
            <person name="Salzberg S.L."/>
            <person name="Sandelin A."/>
            <person name="Schneider C."/>
            <person name="Schoenbach C."/>
            <person name="Sekiguchi K."/>
            <person name="Semple C.A."/>
            <person name="Seno S."/>
            <person name="Sessa L."/>
            <person name="Sheng Y."/>
            <person name="Shibata Y."/>
            <person name="Shimada H."/>
            <person name="Shimada K."/>
            <person name="Silva D."/>
            <person name="Sinclair B."/>
            <person name="Sperling S."/>
            <person name="Stupka E."/>
            <person name="Sugiura K."/>
            <person name="Sultana R."/>
            <person name="Takenaka Y."/>
            <person name="Taki K."/>
            <person name="Tammoja K."/>
            <person name="Tan S.L."/>
            <person name="Tang S."/>
            <person name="Taylor M.S."/>
            <person name="Tegner J."/>
            <person name="Teichmann S.A."/>
            <person name="Ueda H.R."/>
            <person name="van Nimwegen E."/>
            <person name="Verardo R."/>
            <person name="Wei C.L."/>
            <person name="Yagi K."/>
            <person name="Yamanishi H."/>
            <person name="Zabarovsky E."/>
            <person name="Zhu S."/>
            <person name="Zimmer A."/>
            <person name="Hide W."/>
            <person name="Bult C."/>
            <person name="Grimmond S.M."/>
            <person name="Teasdale R.D."/>
            <person name="Liu E.T."/>
            <person name="Brusic V."/>
            <person name="Quackenbush J."/>
            <person name="Wahlestedt C."/>
            <person name="Mattick J.S."/>
            <person name="Hume D.A."/>
            <person name="Kai C."/>
            <person name="Sasaki D."/>
            <person name="Tomaru Y."/>
            <person name="Fukuda S."/>
            <person name="Kanamori-Katayama M."/>
            <person name="Suzuki M."/>
            <person name="Aoki J."/>
            <person name="Arakawa T."/>
            <person name="Iida J."/>
            <person name="Imamura K."/>
            <person name="Itoh M."/>
            <person name="Kato T."/>
            <person name="Kawaji H."/>
            <person name="Kawagashira N."/>
            <person name="Kawashima T."/>
            <person name="Kojima M."/>
            <person name="Kondo S."/>
            <person name="Konno H."/>
            <person name="Nakano K."/>
            <person name="Ninomiya N."/>
            <person name="Nishio T."/>
            <person name="Okada M."/>
            <person name="Plessy C."/>
            <person name="Shibata K."/>
            <person name="Shiraki T."/>
            <person name="Suzuki S."/>
            <person name="Tagami M."/>
            <person name="Waki K."/>
            <person name="Watahiki A."/>
            <person name="Okamura-Oho Y."/>
            <person name="Suzuki H."/>
            <person name="Kawai J."/>
            <person name="Hayashizaki Y."/>
        </authorList>
    </citation>
    <scope>NUCLEOTIDE SEQUENCE [LARGE SCALE MRNA]</scope>
    <source>
        <strain>C57BL/6J</strain>
        <tissue>Bone marrow</tissue>
        <tissue>Heart</tissue>
        <tissue>Liver</tissue>
        <tissue>Placenta</tissue>
    </source>
</reference>
<reference key="2">
    <citation type="journal article" date="2004" name="Genome Res.">
        <title>The status, quality, and expansion of the NIH full-length cDNA project: the Mammalian Gene Collection (MGC).</title>
        <authorList>
            <consortium name="The MGC Project Team"/>
        </authorList>
    </citation>
    <scope>NUCLEOTIDE SEQUENCE [LARGE SCALE MRNA]</scope>
</reference>
<reference key="3">
    <citation type="journal article" date="2010" name="Cell">
        <title>A tissue-specific atlas of mouse protein phosphorylation and expression.</title>
        <authorList>
            <person name="Huttlin E.L."/>
            <person name="Jedrychowski M.P."/>
            <person name="Elias J.E."/>
            <person name="Goswami T."/>
            <person name="Rad R."/>
            <person name="Beausoleil S.A."/>
            <person name="Villen J."/>
            <person name="Haas W."/>
            <person name="Sowa M.E."/>
            <person name="Gygi S.P."/>
        </authorList>
    </citation>
    <scope>IDENTIFICATION BY MASS SPECTROMETRY [LARGE SCALE ANALYSIS]</scope>
    <source>
        <tissue>Heart</tissue>
        <tissue>Kidney</tissue>
        <tissue>Liver</tissue>
        <tissue>Lung</tissue>
        <tissue>Pancreas</tissue>
        <tissue>Spleen</tissue>
        <tissue>Testis</tissue>
    </source>
</reference>
<name>DEOC_MOUSE</name>